<sequence>MPELPEVEVVRRGLDAHVTGKAITAVRVHHPRAVRRHEAGPADLTARLLGMRITGTGRRGKYLWLTLDDGDEPLARRAESSVALVVHLGMSGQMLLGPIPKEDHLRIAALFDDGTALSFVDQRTFGGWLLADLVTVDGTDVPVPVAHVARDPLDPRFDRDAVVKVLRGKHSEIKRQLLDQTVVSGIGNIYADEALWRAKVNGARLAESLTKPKLAEILDHAADVMRDALGQGGTSFDSLYVNVNGESGYFDRSLDAYGREGEPCRRCGAIMRRDKFMNRSSFYCPRCQPRPRVRRA</sequence>
<gene>
    <name evidence="2" type="primary">mutM</name>
    <name evidence="2" type="synonym">fpg</name>
    <name type="ordered locus">Mmcs_1950</name>
</gene>
<evidence type="ECO:0000250" key="1"/>
<evidence type="ECO:0000255" key="2">
    <source>
        <dbReference type="HAMAP-Rule" id="MF_00103"/>
    </source>
</evidence>
<name>FPG_MYCSS</name>
<comment type="function">
    <text evidence="2">Involved in base excision repair of DNA damaged by oxidation or by mutagenic agents. Acts as a DNA glycosylase that recognizes and removes damaged bases. Has a preference for oxidized purines, such as 7,8-dihydro-8-oxoguanine (8-oxoG). Has AP (apurinic/apyrimidinic) lyase activity and introduces nicks in the DNA strand. Cleaves the DNA backbone by beta-delta elimination to generate a single-strand break at the site of the removed base with both 3'- and 5'-phosphates.</text>
</comment>
<comment type="catalytic activity">
    <reaction evidence="2">
        <text>Hydrolysis of DNA containing ring-opened 7-methylguanine residues, releasing 2,6-diamino-4-hydroxy-5-(N-methyl)formamidopyrimidine.</text>
        <dbReference type="EC" id="3.2.2.23"/>
    </reaction>
</comment>
<comment type="catalytic activity">
    <reaction evidence="2">
        <text>2'-deoxyribonucleotide-(2'-deoxyribose 5'-phosphate)-2'-deoxyribonucleotide-DNA = a 3'-end 2'-deoxyribonucleotide-(2,3-dehydro-2,3-deoxyribose 5'-phosphate)-DNA + a 5'-end 5'-phospho-2'-deoxyribonucleoside-DNA + H(+)</text>
        <dbReference type="Rhea" id="RHEA:66592"/>
        <dbReference type="Rhea" id="RHEA-COMP:13180"/>
        <dbReference type="Rhea" id="RHEA-COMP:16897"/>
        <dbReference type="Rhea" id="RHEA-COMP:17067"/>
        <dbReference type="ChEBI" id="CHEBI:15378"/>
        <dbReference type="ChEBI" id="CHEBI:136412"/>
        <dbReference type="ChEBI" id="CHEBI:157695"/>
        <dbReference type="ChEBI" id="CHEBI:167181"/>
        <dbReference type="EC" id="4.2.99.18"/>
    </reaction>
</comment>
<comment type="cofactor">
    <cofactor evidence="2">
        <name>Zn(2+)</name>
        <dbReference type="ChEBI" id="CHEBI:29105"/>
    </cofactor>
    <text evidence="2">Binds 1 zinc ion per subunit.</text>
</comment>
<comment type="subunit">
    <text evidence="2">Monomer.</text>
</comment>
<comment type="similarity">
    <text evidence="2">Belongs to the FPG family.</text>
</comment>
<organism>
    <name type="scientific">Mycobacterium sp. (strain MCS)</name>
    <dbReference type="NCBI Taxonomy" id="164756"/>
    <lineage>
        <taxon>Bacteria</taxon>
        <taxon>Bacillati</taxon>
        <taxon>Actinomycetota</taxon>
        <taxon>Actinomycetes</taxon>
        <taxon>Mycobacteriales</taxon>
        <taxon>Mycobacteriaceae</taxon>
        <taxon>Mycobacterium</taxon>
    </lineage>
</organism>
<accession>Q1BAM5</accession>
<protein>
    <recommendedName>
        <fullName evidence="2">Formamidopyrimidine-DNA glycosylase</fullName>
        <shortName evidence="2">Fapy-DNA glycosylase</shortName>
        <ecNumber evidence="2">3.2.2.23</ecNumber>
    </recommendedName>
    <alternativeName>
        <fullName evidence="2">DNA-(apurinic or apyrimidinic site) lyase MutM</fullName>
        <shortName evidence="2">AP lyase MutM</shortName>
        <ecNumber evidence="2">4.2.99.18</ecNumber>
    </alternativeName>
</protein>
<dbReference type="EC" id="3.2.2.23" evidence="2"/>
<dbReference type="EC" id="4.2.99.18" evidence="2"/>
<dbReference type="EMBL" id="CP000384">
    <property type="protein sequence ID" value="ABG08059.1"/>
    <property type="molecule type" value="Genomic_DNA"/>
</dbReference>
<dbReference type="SMR" id="Q1BAM5"/>
<dbReference type="KEGG" id="mmc:Mmcs_1950"/>
<dbReference type="HOGENOM" id="CLU_038423_1_2_11"/>
<dbReference type="BioCyc" id="MSP164756:G1G6O-1995-MONOMER"/>
<dbReference type="GO" id="GO:0034039">
    <property type="term" value="F:8-oxo-7,8-dihydroguanine DNA N-glycosylase activity"/>
    <property type="evidence" value="ECO:0007669"/>
    <property type="project" value="TreeGrafter"/>
</dbReference>
<dbReference type="GO" id="GO:0140078">
    <property type="term" value="F:class I DNA-(apurinic or apyrimidinic site) endonuclease activity"/>
    <property type="evidence" value="ECO:0007669"/>
    <property type="project" value="UniProtKB-EC"/>
</dbReference>
<dbReference type="GO" id="GO:0003684">
    <property type="term" value="F:damaged DNA binding"/>
    <property type="evidence" value="ECO:0007669"/>
    <property type="project" value="InterPro"/>
</dbReference>
<dbReference type="GO" id="GO:0008270">
    <property type="term" value="F:zinc ion binding"/>
    <property type="evidence" value="ECO:0007669"/>
    <property type="project" value="UniProtKB-UniRule"/>
</dbReference>
<dbReference type="GO" id="GO:0006284">
    <property type="term" value="P:base-excision repair"/>
    <property type="evidence" value="ECO:0007669"/>
    <property type="project" value="InterPro"/>
</dbReference>
<dbReference type="CDD" id="cd08966">
    <property type="entry name" value="EcFpg-like_N"/>
    <property type="match status" value="1"/>
</dbReference>
<dbReference type="FunFam" id="1.10.8.50:FF:000003">
    <property type="entry name" value="Formamidopyrimidine-DNA glycosylase"/>
    <property type="match status" value="1"/>
</dbReference>
<dbReference type="FunFam" id="3.20.190.10:FF:000006">
    <property type="entry name" value="Formamidopyrimidine-DNA glycosylase"/>
    <property type="match status" value="1"/>
</dbReference>
<dbReference type="Gene3D" id="1.10.8.50">
    <property type="match status" value="1"/>
</dbReference>
<dbReference type="Gene3D" id="3.20.190.10">
    <property type="entry name" value="MutM-like, N-terminal"/>
    <property type="match status" value="1"/>
</dbReference>
<dbReference type="HAMAP" id="MF_00103">
    <property type="entry name" value="Fapy_DNA_glycosyl"/>
    <property type="match status" value="1"/>
</dbReference>
<dbReference type="InterPro" id="IPR015886">
    <property type="entry name" value="DNA_glyclase/AP_lyase_DNA-bd"/>
</dbReference>
<dbReference type="InterPro" id="IPR015887">
    <property type="entry name" value="DNA_glyclase_Znf_dom_DNA_BS"/>
</dbReference>
<dbReference type="InterPro" id="IPR020629">
    <property type="entry name" value="Formamido-pyr_DNA_Glyclase"/>
</dbReference>
<dbReference type="InterPro" id="IPR012319">
    <property type="entry name" value="FPG_cat"/>
</dbReference>
<dbReference type="InterPro" id="IPR035937">
    <property type="entry name" value="MutM-like_N-ter"/>
</dbReference>
<dbReference type="InterPro" id="IPR010979">
    <property type="entry name" value="Ribosomal_uS13-like_H2TH"/>
</dbReference>
<dbReference type="InterPro" id="IPR000214">
    <property type="entry name" value="Znf_DNA_glyclase/AP_lyase"/>
</dbReference>
<dbReference type="InterPro" id="IPR010663">
    <property type="entry name" value="Znf_FPG/IleRS"/>
</dbReference>
<dbReference type="NCBIfam" id="TIGR00577">
    <property type="entry name" value="fpg"/>
    <property type="match status" value="1"/>
</dbReference>
<dbReference type="NCBIfam" id="NF002211">
    <property type="entry name" value="PRK01103.1"/>
    <property type="match status" value="1"/>
</dbReference>
<dbReference type="PANTHER" id="PTHR22993">
    <property type="entry name" value="FORMAMIDOPYRIMIDINE-DNA GLYCOSYLASE"/>
    <property type="match status" value="1"/>
</dbReference>
<dbReference type="PANTHER" id="PTHR22993:SF9">
    <property type="entry name" value="FORMAMIDOPYRIMIDINE-DNA GLYCOSYLASE"/>
    <property type="match status" value="1"/>
</dbReference>
<dbReference type="Pfam" id="PF01149">
    <property type="entry name" value="Fapy_DNA_glyco"/>
    <property type="match status" value="1"/>
</dbReference>
<dbReference type="Pfam" id="PF06831">
    <property type="entry name" value="H2TH"/>
    <property type="match status" value="1"/>
</dbReference>
<dbReference type="Pfam" id="PF06827">
    <property type="entry name" value="zf-FPG_IleRS"/>
    <property type="match status" value="1"/>
</dbReference>
<dbReference type="SMART" id="SM00898">
    <property type="entry name" value="Fapy_DNA_glyco"/>
    <property type="match status" value="1"/>
</dbReference>
<dbReference type="SMART" id="SM01232">
    <property type="entry name" value="H2TH"/>
    <property type="match status" value="1"/>
</dbReference>
<dbReference type="SUPFAM" id="SSF57716">
    <property type="entry name" value="Glucocorticoid receptor-like (DNA-binding domain)"/>
    <property type="match status" value="1"/>
</dbReference>
<dbReference type="SUPFAM" id="SSF81624">
    <property type="entry name" value="N-terminal domain of MutM-like DNA repair proteins"/>
    <property type="match status" value="1"/>
</dbReference>
<dbReference type="SUPFAM" id="SSF46946">
    <property type="entry name" value="S13-like H2TH domain"/>
    <property type="match status" value="1"/>
</dbReference>
<dbReference type="PROSITE" id="PS51068">
    <property type="entry name" value="FPG_CAT"/>
    <property type="match status" value="1"/>
</dbReference>
<dbReference type="PROSITE" id="PS01242">
    <property type="entry name" value="ZF_FPG_1"/>
    <property type="match status" value="1"/>
</dbReference>
<dbReference type="PROSITE" id="PS51066">
    <property type="entry name" value="ZF_FPG_2"/>
    <property type="match status" value="1"/>
</dbReference>
<reference key="1">
    <citation type="submission" date="2006-06" db="EMBL/GenBank/DDBJ databases">
        <title>Complete sequence of chromosome of Mycobacterium sp. MCS.</title>
        <authorList>
            <consortium name="US DOE Joint Genome Institute"/>
            <person name="Copeland A."/>
            <person name="Lucas S."/>
            <person name="Lapidus A."/>
            <person name="Barry K."/>
            <person name="Detter J.C."/>
            <person name="Glavina del Rio T."/>
            <person name="Hammon N."/>
            <person name="Israni S."/>
            <person name="Dalin E."/>
            <person name="Tice H."/>
            <person name="Pitluck S."/>
            <person name="Martinez M."/>
            <person name="Schmutz J."/>
            <person name="Larimer F."/>
            <person name="Land M."/>
            <person name="Hauser L."/>
            <person name="Kyrpides N."/>
            <person name="Kim E."/>
            <person name="Miller C.D."/>
            <person name="Hughes J.E."/>
            <person name="Anderson A.J."/>
            <person name="Sims R.C."/>
            <person name="Richardson P."/>
        </authorList>
    </citation>
    <scope>NUCLEOTIDE SEQUENCE [LARGE SCALE GENOMIC DNA]</scope>
    <source>
        <strain>MCS</strain>
    </source>
</reference>
<proteinExistence type="inferred from homology"/>
<keyword id="KW-0227">DNA damage</keyword>
<keyword id="KW-0234">DNA repair</keyword>
<keyword id="KW-0238">DNA-binding</keyword>
<keyword id="KW-0326">Glycosidase</keyword>
<keyword id="KW-0378">Hydrolase</keyword>
<keyword id="KW-0456">Lyase</keyword>
<keyword id="KW-0479">Metal-binding</keyword>
<keyword id="KW-0511">Multifunctional enzyme</keyword>
<keyword id="KW-0862">Zinc</keyword>
<keyword id="KW-0863">Zinc-finger</keyword>
<feature type="initiator methionine" description="Removed" evidence="1">
    <location>
        <position position="1"/>
    </location>
</feature>
<feature type="chain" id="PRO_1000008722" description="Formamidopyrimidine-DNA glycosylase">
    <location>
        <begin position="2"/>
        <end position="296"/>
    </location>
</feature>
<feature type="zinc finger region" description="FPG-type" evidence="2">
    <location>
        <begin position="255"/>
        <end position="289"/>
    </location>
</feature>
<feature type="active site" description="Schiff-base intermediate with DNA" evidence="2">
    <location>
        <position position="2"/>
    </location>
</feature>
<feature type="active site" description="Proton donor" evidence="2">
    <location>
        <position position="3"/>
    </location>
</feature>
<feature type="active site" description="Proton donor; for beta-elimination activity" evidence="2">
    <location>
        <position position="61"/>
    </location>
</feature>
<feature type="active site" description="Proton donor; for delta-elimination activity" evidence="2">
    <location>
        <position position="279"/>
    </location>
</feature>
<feature type="binding site" evidence="2">
    <location>
        <position position="104"/>
    </location>
    <ligand>
        <name>DNA</name>
        <dbReference type="ChEBI" id="CHEBI:16991"/>
    </ligand>
</feature>
<feature type="binding site" evidence="2">
    <location>
        <position position="123"/>
    </location>
    <ligand>
        <name>DNA</name>
        <dbReference type="ChEBI" id="CHEBI:16991"/>
    </ligand>
</feature>
<feature type="binding site" evidence="2">
    <location>
        <position position="169"/>
    </location>
    <ligand>
        <name>DNA</name>
        <dbReference type="ChEBI" id="CHEBI:16991"/>
    </ligand>
</feature>